<gene>
    <name evidence="1" type="primary">fusA2</name>
    <name type="ordered locus">CPS_4765</name>
</gene>
<name>EFG2_COLP3</name>
<evidence type="ECO:0000255" key="1">
    <source>
        <dbReference type="HAMAP-Rule" id="MF_00054"/>
    </source>
</evidence>
<feature type="chain" id="PRO_0000225205" description="Elongation factor G 2">
    <location>
        <begin position="1"/>
        <end position="699"/>
    </location>
</feature>
<feature type="domain" description="tr-type G">
    <location>
        <begin position="8"/>
        <end position="290"/>
    </location>
</feature>
<feature type="binding site" evidence="1">
    <location>
        <begin position="17"/>
        <end position="24"/>
    </location>
    <ligand>
        <name>GTP</name>
        <dbReference type="ChEBI" id="CHEBI:37565"/>
    </ligand>
</feature>
<feature type="binding site" evidence="1">
    <location>
        <begin position="88"/>
        <end position="92"/>
    </location>
    <ligand>
        <name>GTP</name>
        <dbReference type="ChEBI" id="CHEBI:37565"/>
    </ligand>
</feature>
<feature type="binding site" evidence="1">
    <location>
        <begin position="142"/>
        <end position="145"/>
    </location>
    <ligand>
        <name>GTP</name>
        <dbReference type="ChEBI" id="CHEBI:37565"/>
    </ligand>
</feature>
<organism>
    <name type="scientific">Colwellia psychrerythraea (strain 34H / ATCC BAA-681)</name>
    <name type="common">Vibrio psychroerythus</name>
    <dbReference type="NCBI Taxonomy" id="167879"/>
    <lineage>
        <taxon>Bacteria</taxon>
        <taxon>Pseudomonadati</taxon>
        <taxon>Pseudomonadota</taxon>
        <taxon>Gammaproteobacteria</taxon>
        <taxon>Alteromonadales</taxon>
        <taxon>Colwelliaceae</taxon>
        <taxon>Colwellia</taxon>
    </lineage>
</organism>
<reference key="1">
    <citation type="journal article" date="2005" name="Proc. Natl. Acad. Sci. U.S.A.">
        <title>The psychrophilic lifestyle as revealed by the genome sequence of Colwellia psychrerythraea 34H through genomic and proteomic analyses.</title>
        <authorList>
            <person name="Methe B.A."/>
            <person name="Nelson K.E."/>
            <person name="Deming J.W."/>
            <person name="Momen B."/>
            <person name="Melamud E."/>
            <person name="Zhang X."/>
            <person name="Moult J."/>
            <person name="Madupu R."/>
            <person name="Nelson W.C."/>
            <person name="Dodson R.J."/>
            <person name="Brinkac L.M."/>
            <person name="Daugherty S.C."/>
            <person name="Durkin A.S."/>
            <person name="DeBoy R.T."/>
            <person name="Kolonay J.F."/>
            <person name="Sullivan S.A."/>
            <person name="Zhou L."/>
            <person name="Davidsen T.M."/>
            <person name="Wu M."/>
            <person name="Huston A.L."/>
            <person name="Lewis M."/>
            <person name="Weaver B."/>
            <person name="Weidman J.F."/>
            <person name="Khouri H."/>
            <person name="Utterback T.R."/>
            <person name="Feldblyum T.V."/>
            <person name="Fraser C.M."/>
        </authorList>
    </citation>
    <scope>NUCLEOTIDE SEQUENCE [LARGE SCALE GENOMIC DNA]</scope>
    <source>
        <strain>34H / ATCC BAA-681</strain>
    </source>
</reference>
<comment type="function">
    <text evidence="1">Catalyzes the GTP-dependent ribosomal translocation step during translation elongation. During this step, the ribosome changes from the pre-translocational (PRE) to the post-translocational (POST) state as the newly formed A-site-bound peptidyl-tRNA and P-site-bound deacylated tRNA move to the P and E sites, respectively. Catalyzes the coordinated movement of the two tRNA molecules, the mRNA and conformational changes in the ribosome.</text>
</comment>
<comment type="subcellular location">
    <subcellularLocation>
        <location evidence="1">Cytoplasm</location>
    </subcellularLocation>
</comment>
<comment type="similarity">
    <text evidence="1">Belongs to the TRAFAC class translation factor GTPase superfamily. Classic translation factor GTPase family. EF-G/EF-2 subfamily.</text>
</comment>
<keyword id="KW-0963">Cytoplasm</keyword>
<keyword id="KW-0251">Elongation factor</keyword>
<keyword id="KW-0342">GTP-binding</keyword>
<keyword id="KW-0547">Nucleotide-binding</keyword>
<keyword id="KW-0648">Protein biosynthesis</keyword>
<protein>
    <recommendedName>
        <fullName evidence="1">Elongation factor G 2</fullName>
        <shortName evidence="1">EF-G 2</shortName>
    </recommendedName>
</protein>
<accession>Q47UW3</accession>
<proteinExistence type="inferred from homology"/>
<dbReference type="EMBL" id="CP000083">
    <property type="protein sequence ID" value="AAZ27611.1"/>
    <property type="molecule type" value="Genomic_DNA"/>
</dbReference>
<dbReference type="SMR" id="Q47UW3"/>
<dbReference type="STRING" id="167879.CPS_4765"/>
<dbReference type="KEGG" id="cps:CPS_4765"/>
<dbReference type="eggNOG" id="COG0480">
    <property type="taxonomic scope" value="Bacteria"/>
</dbReference>
<dbReference type="HOGENOM" id="CLU_002794_4_1_6"/>
<dbReference type="Proteomes" id="UP000000547">
    <property type="component" value="Chromosome"/>
</dbReference>
<dbReference type="GO" id="GO:0005737">
    <property type="term" value="C:cytoplasm"/>
    <property type="evidence" value="ECO:0007669"/>
    <property type="project" value="UniProtKB-SubCell"/>
</dbReference>
<dbReference type="GO" id="GO:0005525">
    <property type="term" value="F:GTP binding"/>
    <property type="evidence" value="ECO:0007669"/>
    <property type="project" value="UniProtKB-UniRule"/>
</dbReference>
<dbReference type="GO" id="GO:0003924">
    <property type="term" value="F:GTPase activity"/>
    <property type="evidence" value="ECO:0007669"/>
    <property type="project" value="InterPro"/>
</dbReference>
<dbReference type="GO" id="GO:0097216">
    <property type="term" value="F:guanosine tetraphosphate binding"/>
    <property type="evidence" value="ECO:0007669"/>
    <property type="project" value="UniProtKB-ARBA"/>
</dbReference>
<dbReference type="GO" id="GO:0003746">
    <property type="term" value="F:translation elongation factor activity"/>
    <property type="evidence" value="ECO:0007669"/>
    <property type="project" value="UniProtKB-UniRule"/>
</dbReference>
<dbReference type="GO" id="GO:0032790">
    <property type="term" value="P:ribosome disassembly"/>
    <property type="evidence" value="ECO:0007669"/>
    <property type="project" value="TreeGrafter"/>
</dbReference>
<dbReference type="CDD" id="cd01886">
    <property type="entry name" value="EF-G"/>
    <property type="match status" value="1"/>
</dbReference>
<dbReference type="CDD" id="cd16262">
    <property type="entry name" value="EFG_III"/>
    <property type="match status" value="1"/>
</dbReference>
<dbReference type="CDD" id="cd01434">
    <property type="entry name" value="EFG_mtEFG1_IV"/>
    <property type="match status" value="1"/>
</dbReference>
<dbReference type="CDD" id="cd03713">
    <property type="entry name" value="EFG_mtEFG_C"/>
    <property type="match status" value="1"/>
</dbReference>
<dbReference type="CDD" id="cd04088">
    <property type="entry name" value="EFG_mtEFG_II"/>
    <property type="match status" value="1"/>
</dbReference>
<dbReference type="FunFam" id="2.40.30.10:FF:000006">
    <property type="entry name" value="Elongation factor G"/>
    <property type="match status" value="1"/>
</dbReference>
<dbReference type="FunFam" id="3.30.230.10:FF:000003">
    <property type="entry name" value="Elongation factor G"/>
    <property type="match status" value="1"/>
</dbReference>
<dbReference type="FunFam" id="3.30.70.240:FF:000001">
    <property type="entry name" value="Elongation factor G"/>
    <property type="match status" value="1"/>
</dbReference>
<dbReference type="FunFam" id="3.30.70.870:FF:000001">
    <property type="entry name" value="Elongation factor G"/>
    <property type="match status" value="1"/>
</dbReference>
<dbReference type="FunFam" id="3.40.50.300:FF:000029">
    <property type="entry name" value="Elongation factor G"/>
    <property type="match status" value="1"/>
</dbReference>
<dbReference type="Gene3D" id="3.30.230.10">
    <property type="match status" value="1"/>
</dbReference>
<dbReference type="Gene3D" id="3.30.70.240">
    <property type="match status" value="1"/>
</dbReference>
<dbReference type="Gene3D" id="3.30.70.870">
    <property type="entry name" value="Elongation Factor G (Translational Gtpase), domain 3"/>
    <property type="match status" value="1"/>
</dbReference>
<dbReference type="Gene3D" id="3.40.50.300">
    <property type="entry name" value="P-loop containing nucleotide triphosphate hydrolases"/>
    <property type="match status" value="1"/>
</dbReference>
<dbReference type="Gene3D" id="2.40.30.10">
    <property type="entry name" value="Translation factors"/>
    <property type="match status" value="1"/>
</dbReference>
<dbReference type="HAMAP" id="MF_00054_B">
    <property type="entry name" value="EF_G_EF_2_B"/>
    <property type="match status" value="1"/>
</dbReference>
<dbReference type="InterPro" id="IPR041095">
    <property type="entry name" value="EFG_II"/>
</dbReference>
<dbReference type="InterPro" id="IPR009022">
    <property type="entry name" value="EFG_III"/>
</dbReference>
<dbReference type="InterPro" id="IPR035647">
    <property type="entry name" value="EFG_III/V"/>
</dbReference>
<dbReference type="InterPro" id="IPR047872">
    <property type="entry name" value="EFG_IV"/>
</dbReference>
<dbReference type="InterPro" id="IPR035649">
    <property type="entry name" value="EFG_V"/>
</dbReference>
<dbReference type="InterPro" id="IPR000640">
    <property type="entry name" value="EFG_V-like"/>
</dbReference>
<dbReference type="InterPro" id="IPR004161">
    <property type="entry name" value="EFTu-like_2"/>
</dbReference>
<dbReference type="InterPro" id="IPR031157">
    <property type="entry name" value="G_TR_CS"/>
</dbReference>
<dbReference type="InterPro" id="IPR027417">
    <property type="entry name" value="P-loop_NTPase"/>
</dbReference>
<dbReference type="InterPro" id="IPR020568">
    <property type="entry name" value="Ribosomal_Su5_D2-typ_SF"/>
</dbReference>
<dbReference type="InterPro" id="IPR014721">
    <property type="entry name" value="Ribsml_uS5_D2-typ_fold_subgr"/>
</dbReference>
<dbReference type="InterPro" id="IPR005225">
    <property type="entry name" value="Small_GTP-bd"/>
</dbReference>
<dbReference type="InterPro" id="IPR000795">
    <property type="entry name" value="T_Tr_GTP-bd_dom"/>
</dbReference>
<dbReference type="InterPro" id="IPR009000">
    <property type="entry name" value="Transl_B-barrel_sf"/>
</dbReference>
<dbReference type="InterPro" id="IPR004540">
    <property type="entry name" value="Transl_elong_EFG/EF2"/>
</dbReference>
<dbReference type="InterPro" id="IPR005517">
    <property type="entry name" value="Transl_elong_EFG/EF2_IV"/>
</dbReference>
<dbReference type="NCBIfam" id="TIGR00484">
    <property type="entry name" value="EF-G"/>
    <property type="match status" value="1"/>
</dbReference>
<dbReference type="NCBIfam" id="NF009381">
    <property type="entry name" value="PRK12740.1-5"/>
    <property type="match status" value="1"/>
</dbReference>
<dbReference type="NCBIfam" id="TIGR00231">
    <property type="entry name" value="small_GTP"/>
    <property type="match status" value="1"/>
</dbReference>
<dbReference type="PANTHER" id="PTHR43261:SF1">
    <property type="entry name" value="RIBOSOME-RELEASING FACTOR 2, MITOCHONDRIAL"/>
    <property type="match status" value="1"/>
</dbReference>
<dbReference type="PANTHER" id="PTHR43261">
    <property type="entry name" value="TRANSLATION ELONGATION FACTOR G-RELATED"/>
    <property type="match status" value="1"/>
</dbReference>
<dbReference type="Pfam" id="PF00679">
    <property type="entry name" value="EFG_C"/>
    <property type="match status" value="1"/>
</dbReference>
<dbReference type="Pfam" id="PF14492">
    <property type="entry name" value="EFG_III"/>
    <property type="match status" value="1"/>
</dbReference>
<dbReference type="Pfam" id="PF03764">
    <property type="entry name" value="EFG_IV"/>
    <property type="match status" value="1"/>
</dbReference>
<dbReference type="Pfam" id="PF00009">
    <property type="entry name" value="GTP_EFTU"/>
    <property type="match status" value="1"/>
</dbReference>
<dbReference type="Pfam" id="PF03144">
    <property type="entry name" value="GTP_EFTU_D2"/>
    <property type="match status" value="1"/>
</dbReference>
<dbReference type="PRINTS" id="PR00315">
    <property type="entry name" value="ELONGATNFCT"/>
</dbReference>
<dbReference type="SMART" id="SM00838">
    <property type="entry name" value="EFG_C"/>
    <property type="match status" value="1"/>
</dbReference>
<dbReference type="SMART" id="SM00889">
    <property type="entry name" value="EFG_IV"/>
    <property type="match status" value="1"/>
</dbReference>
<dbReference type="SUPFAM" id="SSF54980">
    <property type="entry name" value="EF-G C-terminal domain-like"/>
    <property type="match status" value="2"/>
</dbReference>
<dbReference type="SUPFAM" id="SSF52540">
    <property type="entry name" value="P-loop containing nucleoside triphosphate hydrolases"/>
    <property type="match status" value="1"/>
</dbReference>
<dbReference type="SUPFAM" id="SSF54211">
    <property type="entry name" value="Ribosomal protein S5 domain 2-like"/>
    <property type="match status" value="1"/>
</dbReference>
<dbReference type="SUPFAM" id="SSF50447">
    <property type="entry name" value="Translation proteins"/>
    <property type="match status" value="1"/>
</dbReference>
<dbReference type="PROSITE" id="PS00301">
    <property type="entry name" value="G_TR_1"/>
    <property type="match status" value="1"/>
</dbReference>
<dbReference type="PROSITE" id="PS51722">
    <property type="entry name" value="G_TR_2"/>
    <property type="match status" value="1"/>
</dbReference>
<sequence>MARITPIERYRNIGICAHVDAGKTTTTERVLFYTGLSHKIGEVHDGAATMDWMEQEQERGITITSAATTCFWKGMEGQFEDHRINIIDTPGHVDFTIEVERSLRVLDGAVLVLCGSSGVQPQTETVWRQMEKYAVPRIVFVNKMDRTGADFLYVVEQLKTRLGANAVPIHLAIGAEDDFEGVVDLIKMKAINWNASDQGMTFSYEEIPADMQDMAEEWRENLISEAAEANEELMDKYLEEGDLTEEEIKVGLRARTLANEIILCSCGSAFKNKGVQAVLDAVIEYLPSPTEVAAITGINDDKDESEGIRSADDEAPFSALAFKIATDPFVGTLTFFRVYSGVVQTGDSVYNPVKGKKERFGRIVQMHANDRQEIKEVRAGDIAAAIGLKDVTTGDTLCDAKHIITLERMEFPEPVISVAVEPRTLAAQEKMGIALGKLAAEDPSFRVATDDETGQTIISGMGELHLDILVERMKREFGVECNVGNPQVSYRETIRGTVEVEGKFIRQSGGKGQFGHVWLKMEPNEEGAGFEFVNEIVGGTVPKEFIPAVEKGCKEQMDSGVLAGYPLLDIKVTLYDGSFHDVDSNEIAFKVAASMGFRKGALEANPVILEPMMKVEVTTPEANMGDVVGDLNRRRGMIDGMDEGPAGSKIVNALVPLAEMFGYATDLRSATQGRASYSMEFQQYNEAPKLVAQKIMETR</sequence>